<protein>
    <recommendedName>
        <fullName evidence="1">Large ribosomal subunit protein uL22</fullName>
    </recommendedName>
    <alternativeName>
        <fullName evidence="2">50S ribosomal protein L22</fullName>
    </alternativeName>
</protein>
<gene>
    <name evidence="1" type="primary">rplV</name>
    <name type="ordered locus">Sputcn32_3754</name>
</gene>
<comment type="function">
    <text evidence="1">This protein binds specifically to 23S rRNA; its binding is stimulated by other ribosomal proteins, e.g. L4, L17, and L20. It is important during the early stages of 50S assembly. It makes multiple contacts with different domains of the 23S rRNA in the assembled 50S subunit and ribosome (By similarity).</text>
</comment>
<comment type="function">
    <text evidence="1">The globular domain of the protein is located near the polypeptide exit tunnel on the outside of the subunit, while an extended beta-hairpin is found that lines the wall of the exit tunnel in the center of the 70S ribosome.</text>
</comment>
<comment type="subunit">
    <text evidence="1">Part of the 50S ribosomal subunit.</text>
</comment>
<comment type="similarity">
    <text evidence="1">Belongs to the universal ribosomal protein uL22 family.</text>
</comment>
<feature type="chain" id="PRO_1000052648" description="Large ribosomal subunit protein uL22">
    <location>
        <begin position="1"/>
        <end position="110"/>
    </location>
</feature>
<reference key="1">
    <citation type="submission" date="2007-04" db="EMBL/GenBank/DDBJ databases">
        <title>Complete sequence of Shewanella putrefaciens CN-32.</title>
        <authorList>
            <consortium name="US DOE Joint Genome Institute"/>
            <person name="Copeland A."/>
            <person name="Lucas S."/>
            <person name="Lapidus A."/>
            <person name="Barry K."/>
            <person name="Detter J.C."/>
            <person name="Glavina del Rio T."/>
            <person name="Hammon N."/>
            <person name="Israni S."/>
            <person name="Dalin E."/>
            <person name="Tice H."/>
            <person name="Pitluck S."/>
            <person name="Chain P."/>
            <person name="Malfatti S."/>
            <person name="Shin M."/>
            <person name="Vergez L."/>
            <person name="Schmutz J."/>
            <person name="Larimer F."/>
            <person name="Land M."/>
            <person name="Hauser L."/>
            <person name="Kyrpides N."/>
            <person name="Mikhailova N."/>
            <person name="Romine M.F."/>
            <person name="Fredrickson J."/>
            <person name="Tiedje J."/>
            <person name="Richardson P."/>
        </authorList>
    </citation>
    <scope>NUCLEOTIDE SEQUENCE [LARGE SCALE GENOMIC DNA]</scope>
    <source>
        <strain>CN-32 / ATCC BAA-453</strain>
    </source>
</reference>
<sequence length="110" mass="12071">MEVLAKHRFARTSAQKARLVADQIRGLPVAKALEILTFSPKKAAVLVKKVLDSAIANAEHNEGADIDELKVGAVFVDEGPTMKRIMPRAKGRADRIMKRTSHITVVVSDR</sequence>
<accession>A4YBX8</accession>
<proteinExistence type="inferred from homology"/>
<evidence type="ECO:0000255" key="1">
    <source>
        <dbReference type="HAMAP-Rule" id="MF_01331"/>
    </source>
</evidence>
<evidence type="ECO:0000305" key="2"/>
<dbReference type="EMBL" id="CP000681">
    <property type="protein sequence ID" value="ABP77461.1"/>
    <property type="molecule type" value="Genomic_DNA"/>
</dbReference>
<dbReference type="SMR" id="A4YBX8"/>
<dbReference type="STRING" id="319224.Sputcn32_3754"/>
<dbReference type="KEGG" id="spc:Sputcn32_3754"/>
<dbReference type="eggNOG" id="COG0091">
    <property type="taxonomic scope" value="Bacteria"/>
</dbReference>
<dbReference type="HOGENOM" id="CLU_083987_3_3_6"/>
<dbReference type="GO" id="GO:0022625">
    <property type="term" value="C:cytosolic large ribosomal subunit"/>
    <property type="evidence" value="ECO:0007669"/>
    <property type="project" value="TreeGrafter"/>
</dbReference>
<dbReference type="GO" id="GO:0019843">
    <property type="term" value="F:rRNA binding"/>
    <property type="evidence" value="ECO:0007669"/>
    <property type="project" value="UniProtKB-UniRule"/>
</dbReference>
<dbReference type="GO" id="GO:0003735">
    <property type="term" value="F:structural constituent of ribosome"/>
    <property type="evidence" value="ECO:0007669"/>
    <property type="project" value="InterPro"/>
</dbReference>
<dbReference type="GO" id="GO:0006412">
    <property type="term" value="P:translation"/>
    <property type="evidence" value="ECO:0007669"/>
    <property type="project" value="UniProtKB-UniRule"/>
</dbReference>
<dbReference type="CDD" id="cd00336">
    <property type="entry name" value="Ribosomal_L22"/>
    <property type="match status" value="1"/>
</dbReference>
<dbReference type="FunFam" id="3.90.470.10:FF:000001">
    <property type="entry name" value="50S ribosomal protein L22"/>
    <property type="match status" value="1"/>
</dbReference>
<dbReference type="Gene3D" id="3.90.470.10">
    <property type="entry name" value="Ribosomal protein L22/L17"/>
    <property type="match status" value="1"/>
</dbReference>
<dbReference type="HAMAP" id="MF_01331_B">
    <property type="entry name" value="Ribosomal_uL22_B"/>
    <property type="match status" value="1"/>
</dbReference>
<dbReference type="InterPro" id="IPR001063">
    <property type="entry name" value="Ribosomal_uL22"/>
</dbReference>
<dbReference type="InterPro" id="IPR005727">
    <property type="entry name" value="Ribosomal_uL22_bac/chlpt-type"/>
</dbReference>
<dbReference type="InterPro" id="IPR047867">
    <property type="entry name" value="Ribosomal_uL22_bac/org-type"/>
</dbReference>
<dbReference type="InterPro" id="IPR018260">
    <property type="entry name" value="Ribosomal_uL22_CS"/>
</dbReference>
<dbReference type="InterPro" id="IPR036394">
    <property type="entry name" value="Ribosomal_uL22_sf"/>
</dbReference>
<dbReference type="NCBIfam" id="TIGR01044">
    <property type="entry name" value="rplV_bact"/>
    <property type="match status" value="1"/>
</dbReference>
<dbReference type="PANTHER" id="PTHR13501">
    <property type="entry name" value="CHLOROPLAST 50S RIBOSOMAL PROTEIN L22-RELATED"/>
    <property type="match status" value="1"/>
</dbReference>
<dbReference type="PANTHER" id="PTHR13501:SF8">
    <property type="entry name" value="LARGE RIBOSOMAL SUBUNIT PROTEIN UL22M"/>
    <property type="match status" value="1"/>
</dbReference>
<dbReference type="Pfam" id="PF00237">
    <property type="entry name" value="Ribosomal_L22"/>
    <property type="match status" value="1"/>
</dbReference>
<dbReference type="SUPFAM" id="SSF54843">
    <property type="entry name" value="Ribosomal protein L22"/>
    <property type="match status" value="1"/>
</dbReference>
<dbReference type="PROSITE" id="PS00464">
    <property type="entry name" value="RIBOSOMAL_L22"/>
    <property type="match status" value="1"/>
</dbReference>
<keyword id="KW-0687">Ribonucleoprotein</keyword>
<keyword id="KW-0689">Ribosomal protein</keyword>
<keyword id="KW-0694">RNA-binding</keyword>
<keyword id="KW-0699">rRNA-binding</keyword>
<name>RL22_SHEPC</name>
<organism>
    <name type="scientific">Shewanella putrefaciens (strain CN-32 / ATCC BAA-453)</name>
    <dbReference type="NCBI Taxonomy" id="319224"/>
    <lineage>
        <taxon>Bacteria</taxon>
        <taxon>Pseudomonadati</taxon>
        <taxon>Pseudomonadota</taxon>
        <taxon>Gammaproteobacteria</taxon>
        <taxon>Alteromonadales</taxon>
        <taxon>Shewanellaceae</taxon>
        <taxon>Shewanella</taxon>
    </lineage>
</organism>